<keyword id="KW-0489">Methyltransferase</keyword>
<keyword id="KW-0506">mRNA capping</keyword>
<keyword id="KW-0507">mRNA processing</keyword>
<keyword id="KW-0539">Nucleus</keyword>
<keyword id="KW-1185">Reference proteome</keyword>
<keyword id="KW-0949">S-adenosyl-L-methionine</keyword>
<keyword id="KW-0808">Transferase</keyword>
<dbReference type="EC" id="2.1.1.296" evidence="1"/>
<dbReference type="EMBL" id="AF117649">
    <property type="protein sequence ID" value="AAD22030.1"/>
    <property type="molecule type" value="mRNA"/>
</dbReference>
<dbReference type="EMBL" id="AE013599">
    <property type="protein sequence ID" value="AAF57788.1"/>
    <property type="molecule type" value="Genomic_DNA"/>
</dbReference>
<dbReference type="EMBL" id="AL035311">
    <property type="protein sequence ID" value="CAA22952.1"/>
    <property type="molecule type" value="Genomic_DNA"/>
</dbReference>
<dbReference type="EMBL" id="AY050236">
    <property type="protein sequence ID" value="AAK84935.1"/>
    <property type="molecule type" value="mRNA"/>
</dbReference>
<dbReference type="PIR" id="T13577">
    <property type="entry name" value="T13577"/>
</dbReference>
<dbReference type="RefSeq" id="NP_477413.1">
    <property type="nucleotide sequence ID" value="NM_058065.3"/>
</dbReference>
<dbReference type="SMR" id="Q9UAS6"/>
<dbReference type="FunCoup" id="Q9UAS6">
    <property type="interactions" value="2396"/>
</dbReference>
<dbReference type="STRING" id="7227.FBpp0088518"/>
<dbReference type="PaxDb" id="7227-FBpp0088518"/>
<dbReference type="DNASU" id="37034"/>
<dbReference type="EnsemblMetazoa" id="FBtr0089549">
    <property type="protein sequence ID" value="FBpp0088518"/>
    <property type="gene ID" value="FBgn0026309"/>
</dbReference>
<dbReference type="GeneID" id="37034"/>
<dbReference type="KEGG" id="dme:Dmel_CG5032"/>
<dbReference type="UCSC" id="CG5032-RA">
    <property type="organism name" value="d. melanogaster"/>
</dbReference>
<dbReference type="AGR" id="FB:FBgn0026309"/>
<dbReference type="CTD" id="109861"/>
<dbReference type="FlyBase" id="FBgn0026309">
    <property type="gene designation" value="aft"/>
</dbReference>
<dbReference type="VEuPathDB" id="VectorBase:FBgn0026309"/>
<dbReference type="eggNOG" id="KOG3674">
    <property type="taxonomic scope" value="Eukaryota"/>
</dbReference>
<dbReference type="HOGENOM" id="CLU_019427_0_0_1"/>
<dbReference type="InParanoid" id="Q9UAS6"/>
<dbReference type="OMA" id="EFVTVAW"/>
<dbReference type="OrthoDB" id="429597at2759"/>
<dbReference type="PhylomeDB" id="Q9UAS6"/>
<dbReference type="BioGRID-ORCS" id="37034">
    <property type="hits" value="0 hits in 1 CRISPR screen"/>
</dbReference>
<dbReference type="GenomeRNAi" id="37034"/>
<dbReference type="PRO" id="PR:Q9UAS6"/>
<dbReference type="Proteomes" id="UP000000803">
    <property type="component" value="Chromosome 2R"/>
</dbReference>
<dbReference type="Bgee" id="FBgn0026309">
    <property type="expression patterns" value="Expressed in eye disc (Drosophila) and 24 other cell types or tissues"/>
</dbReference>
<dbReference type="ExpressionAtlas" id="Q9UAS6">
    <property type="expression patterns" value="baseline and differential"/>
</dbReference>
<dbReference type="GO" id="GO:0005737">
    <property type="term" value="C:cytoplasm"/>
    <property type="evidence" value="ECO:0000318"/>
    <property type="project" value="GO_Central"/>
</dbReference>
<dbReference type="GO" id="GO:0005634">
    <property type="term" value="C:nucleus"/>
    <property type="evidence" value="ECO:0000314"/>
    <property type="project" value="FlyBase"/>
</dbReference>
<dbReference type="GO" id="GO:0004483">
    <property type="term" value="F:mRNA (nucleoside-2'-O-)-methyltransferase activity"/>
    <property type="evidence" value="ECO:0000315"/>
    <property type="project" value="FlyBase"/>
</dbReference>
<dbReference type="GO" id="GO:0006370">
    <property type="term" value="P:7-methylguanosine mRNA capping"/>
    <property type="evidence" value="ECO:0000315"/>
    <property type="project" value="FlyBase"/>
</dbReference>
<dbReference type="GO" id="GO:0032259">
    <property type="term" value="P:methylation"/>
    <property type="evidence" value="ECO:0007669"/>
    <property type="project" value="UniProtKB-KW"/>
</dbReference>
<dbReference type="GO" id="GO:0007424">
    <property type="term" value="P:open tracheal system development"/>
    <property type="evidence" value="ECO:0000315"/>
    <property type="project" value="FlyBase"/>
</dbReference>
<dbReference type="GO" id="GO:1904582">
    <property type="term" value="P:positive regulation of intracellular mRNA localization"/>
    <property type="evidence" value="ECO:0000316"/>
    <property type="project" value="FlyBase"/>
</dbReference>
<dbReference type="FunFam" id="3.40.50.12760:FF:000009">
    <property type="entry name" value="GD11317"/>
    <property type="match status" value="1"/>
</dbReference>
<dbReference type="Gene3D" id="3.40.50.12760">
    <property type="match status" value="1"/>
</dbReference>
<dbReference type="InterPro" id="IPR025807">
    <property type="entry name" value="Adrift-typ_MeTrfase"/>
</dbReference>
<dbReference type="InterPro" id="IPR050851">
    <property type="entry name" value="mRNA_Cap_2O-Ribose_MeTrfase"/>
</dbReference>
<dbReference type="InterPro" id="IPR002877">
    <property type="entry name" value="RNA_MeTrfase_FtsJ_dom"/>
</dbReference>
<dbReference type="InterPro" id="IPR029063">
    <property type="entry name" value="SAM-dependent_MTases_sf"/>
</dbReference>
<dbReference type="PANTHER" id="PTHR16121">
    <property type="entry name" value="CAP-SPECIFIC MRNA (NUCLEOSIDE-2'-O-)-METHYLTRANSFERASE 1-RELATED"/>
    <property type="match status" value="1"/>
</dbReference>
<dbReference type="PANTHER" id="PTHR16121:SF2">
    <property type="entry name" value="CAP-SPECIFIC MRNA (NUCLEOSIDE-2'-O-)-METHYLTRANSFERASE 2"/>
    <property type="match status" value="1"/>
</dbReference>
<dbReference type="Pfam" id="PF01728">
    <property type="entry name" value="FtsJ"/>
    <property type="match status" value="1"/>
</dbReference>
<dbReference type="SUPFAM" id="SSF53335">
    <property type="entry name" value="S-adenosyl-L-methionine-dependent methyltransferases"/>
    <property type="match status" value="1"/>
</dbReference>
<dbReference type="PROSITE" id="PS51614">
    <property type="entry name" value="SAM_MT_ADRIFT"/>
    <property type="match status" value="1"/>
</dbReference>
<gene>
    <name type="primary">cmtr2</name>
    <name type="synonym">aft</name>
    <name type="ORF">CG5032</name>
</gene>
<name>CMTR2_DROME</name>
<proteinExistence type="evidence at transcript level"/>
<reference key="1">
    <citation type="journal article" date="1999" name="Development">
        <title>adrift, a novel bnl-induced Drosophila gene, required for tracheal pathfinding into the CNS.</title>
        <authorList>
            <person name="Englund C."/>
            <person name="Uv A.E."/>
            <person name="Cantera R."/>
            <person name="Mathies L.D."/>
            <person name="Krasnow M.A."/>
            <person name="Samakovlis C."/>
        </authorList>
    </citation>
    <scope>NUCLEOTIDE SEQUENCE [MRNA]</scope>
    <scope>FUNCTION</scope>
    <scope>SUBCELLULAR LOCATION</scope>
    <scope>DEVELOPMENTAL STAGE</scope>
    <scope>INDUCTION</scope>
    <scope>DISRUPTION PHENOTYPE</scope>
</reference>
<reference key="2">
    <citation type="journal article" date="2000" name="Science">
        <title>The genome sequence of Drosophila melanogaster.</title>
        <authorList>
            <person name="Adams M.D."/>
            <person name="Celniker S.E."/>
            <person name="Holt R.A."/>
            <person name="Evans C.A."/>
            <person name="Gocayne J.D."/>
            <person name="Amanatides P.G."/>
            <person name="Scherer S.E."/>
            <person name="Li P.W."/>
            <person name="Hoskins R.A."/>
            <person name="Galle R.F."/>
            <person name="George R.A."/>
            <person name="Lewis S.E."/>
            <person name="Richards S."/>
            <person name="Ashburner M."/>
            <person name="Henderson S.N."/>
            <person name="Sutton G.G."/>
            <person name="Wortman J.R."/>
            <person name="Yandell M.D."/>
            <person name="Zhang Q."/>
            <person name="Chen L.X."/>
            <person name="Brandon R.C."/>
            <person name="Rogers Y.-H.C."/>
            <person name="Blazej R.G."/>
            <person name="Champe M."/>
            <person name="Pfeiffer B.D."/>
            <person name="Wan K.H."/>
            <person name="Doyle C."/>
            <person name="Baxter E.G."/>
            <person name="Helt G."/>
            <person name="Nelson C.R."/>
            <person name="Miklos G.L.G."/>
            <person name="Abril J.F."/>
            <person name="Agbayani A."/>
            <person name="An H.-J."/>
            <person name="Andrews-Pfannkoch C."/>
            <person name="Baldwin D."/>
            <person name="Ballew R.M."/>
            <person name="Basu A."/>
            <person name="Baxendale J."/>
            <person name="Bayraktaroglu L."/>
            <person name="Beasley E.M."/>
            <person name="Beeson K.Y."/>
            <person name="Benos P.V."/>
            <person name="Berman B.P."/>
            <person name="Bhandari D."/>
            <person name="Bolshakov S."/>
            <person name="Borkova D."/>
            <person name="Botchan M.R."/>
            <person name="Bouck J."/>
            <person name="Brokstein P."/>
            <person name="Brottier P."/>
            <person name="Burtis K.C."/>
            <person name="Busam D.A."/>
            <person name="Butler H."/>
            <person name="Cadieu E."/>
            <person name="Center A."/>
            <person name="Chandra I."/>
            <person name="Cherry J.M."/>
            <person name="Cawley S."/>
            <person name="Dahlke C."/>
            <person name="Davenport L.B."/>
            <person name="Davies P."/>
            <person name="de Pablos B."/>
            <person name="Delcher A."/>
            <person name="Deng Z."/>
            <person name="Mays A.D."/>
            <person name="Dew I."/>
            <person name="Dietz S.M."/>
            <person name="Dodson K."/>
            <person name="Doup L.E."/>
            <person name="Downes M."/>
            <person name="Dugan-Rocha S."/>
            <person name="Dunkov B.C."/>
            <person name="Dunn P."/>
            <person name="Durbin K.J."/>
            <person name="Evangelista C.C."/>
            <person name="Ferraz C."/>
            <person name="Ferriera S."/>
            <person name="Fleischmann W."/>
            <person name="Fosler C."/>
            <person name="Gabrielian A.E."/>
            <person name="Garg N.S."/>
            <person name="Gelbart W.M."/>
            <person name="Glasser K."/>
            <person name="Glodek A."/>
            <person name="Gong F."/>
            <person name="Gorrell J.H."/>
            <person name="Gu Z."/>
            <person name="Guan P."/>
            <person name="Harris M."/>
            <person name="Harris N.L."/>
            <person name="Harvey D.A."/>
            <person name="Heiman T.J."/>
            <person name="Hernandez J.R."/>
            <person name="Houck J."/>
            <person name="Hostin D."/>
            <person name="Houston K.A."/>
            <person name="Howland T.J."/>
            <person name="Wei M.-H."/>
            <person name="Ibegwam C."/>
            <person name="Jalali M."/>
            <person name="Kalush F."/>
            <person name="Karpen G.H."/>
            <person name="Ke Z."/>
            <person name="Kennison J.A."/>
            <person name="Ketchum K.A."/>
            <person name="Kimmel B.E."/>
            <person name="Kodira C.D."/>
            <person name="Kraft C.L."/>
            <person name="Kravitz S."/>
            <person name="Kulp D."/>
            <person name="Lai Z."/>
            <person name="Lasko P."/>
            <person name="Lei Y."/>
            <person name="Levitsky A.A."/>
            <person name="Li J.H."/>
            <person name="Li Z."/>
            <person name="Liang Y."/>
            <person name="Lin X."/>
            <person name="Liu X."/>
            <person name="Mattei B."/>
            <person name="McIntosh T.C."/>
            <person name="McLeod M.P."/>
            <person name="McPherson D."/>
            <person name="Merkulov G."/>
            <person name="Milshina N.V."/>
            <person name="Mobarry C."/>
            <person name="Morris J."/>
            <person name="Moshrefi A."/>
            <person name="Mount S.M."/>
            <person name="Moy M."/>
            <person name="Murphy B."/>
            <person name="Murphy L."/>
            <person name="Muzny D.M."/>
            <person name="Nelson D.L."/>
            <person name="Nelson D.R."/>
            <person name="Nelson K.A."/>
            <person name="Nixon K."/>
            <person name="Nusskern D.R."/>
            <person name="Pacleb J.M."/>
            <person name="Palazzolo M."/>
            <person name="Pittman G.S."/>
            <person name="Pan S."/>
            <person name="Pollard J."/>
            <person name="Puri V."/>
            <person name="Reese M.G."/>
            <person name="Reinert K."/>
            <person name="Remington K."/>
            <person name="Saunders R.D.C."/>
            <person name="Scheeler F."/>
            <person name="Shen H."/>
            <person name="Shue B.C."/>
            <person name="Siden-Kiamos I."/>
            <person name="Simpson M."/>
            <person name="Skupski M.P."/>
            <person name="Smith T.J."/>
            <person name="Spier E."/>
            <person name="Spradling A.C."/>
            <person name="Stapleton M."/>
            <person name="Strong R."/>
            <person name="Sun E."/>
            <person name="Svirskas R."/>
            <person name="Tector C."/>
            <person name="Turner R."/>
            <person name="Venter E."/>
            <person name="Wang A.H."/>
            <person name="Wang X."/>
            <person name="Wang Z.-Y."/>
            <person name="Wassarman D.A."/>
            <person name="Weinstock G.M."/>
            <person name="Weissenbach J."/>
            <person name="Williams S.M."/>
            <person name="Woodage T."/>
            <person name="Worley K.C."/>
            <person name="Wu D."/>
            <person name="Yang S."/>
            <person name="Yao Q.A."/>
            <person name="Ye J."/>
            <person name="Yeh R.-F."/>
            <person name="Zaveri J.S."/>
            <person name="Zhan M."/>
            <person name="Zhang G."/>
            <person name="Zhao Q."/>
            <person name="Zheng L."/>
            <person name="Zheng X.H."/>
            <person name="Zhong F.N."/>
            <person name="Zhong W."/>
            <person name="Zhou X."/>
            <person name="Zhu S.C."/>
            <person name="Zhu X."/>
            <person name="Smith H.O."/>
            <person name="Gibbs R.A."/>
            <person name="Myers E.W."/>
            <person name="Rubin G.M."/>
            <person name="Venter J.C."/>
        </authorList>
    </citation>
    <scope>NUCLEOTIDE SEQUENCE [LARGE SCALE GENOMIC DNA]</scope>
    <source>
        <strain>Berkeley</strain>
    </source>
</reference>
<reference key="3">
    <citation type="journal article" date="2002" name="Genome Biol.">
        <title>Annotation of the Drosophila melanogaster euchromatic genome: a systematic review.</title>
        <authorList>
            <person name="Misra S."/>
            <person name="Crosby M.A."/>
            <person name="Mungall C.J."/>
            <person name="Matthews B.B."/>
            <person name="Campbell K.S."/>
            <person name="Hradecky P."/>
            <person name="Huang Y."/>
            <person name="Kaminker J.S."/>
            <person name="Millburn G.H."/>
            <person name="Prochnik S.E."/>
            <person name="Smith C.D."/>
            <person name="Tupy J.L."/>
            <person name="Whitfield E.J."/>
            <person name="Bayraktaroglu L."/>
            <person name="Berman B.P."/>
            <person name="Bettencourt B.R."/>
            <person name="Celniker S.E."/>
            <person name="de Grey A.D.N.J."/>
            <person name="Drysdale R.A."/>
            <person name="Harris N.L."/>
            <person name="Richter J."/>
            <person name="Russo S."/>
            <person name="Schroeder A.J."/>
            <person name="Shu S.Q."/>
            <person name="Stapleton M."/>
            <person name="Yamada C."/>
            <person name="Ashburner M."/>
            <person name="Gelbart W.M."/>
            <person name="Rubin G.M."/>
            <person name="Lewis S.E."/>
        </authorList>
    </citation>
    <scope>GENOME REANNOTATION</scope>
    <source>
        <strain>Berkeley</strain>
    </source>
</reference>
<reference key="4">
    <citation type="journal article" date="2000" name="Science">
        <title>From sequence to chromosome: the tip of the X chromosome of D. melanogaster.</title>
        <authorList>
            <person name="Benos P.V."/>
            <person name="Gatt M.K."/>
            <person name="Ashburner M."/>
            <person name="Murphy L."/>
            <person name="Harris D."/>
            <person name="Barrell B.G."/>
            <person name="Ferraz C."/>
            <person name="Vidal S."/>
            <person name="Brun C."/>
            <person name="Demailles J."/>
            <person name="Cadieu E."/>
            <person name="Dreano S."/>
            <person name="Gloux S."/>
            <person name="Lelaure V."/>
            <person name="Mottier S."/>
            <person name="Galibert F."/>
            <person name="Borkova D."/>
            <person name="Minana B."/>
            <person name="Kafatos F.C."/>
            <person name="Louis C."/>
            <person name="Siden-Kiamos I."/>
            <person name="Bolshakov S."/>
            <person name="Papagiannakis G."/>
            <person name="Spanos L."/>
            <person name="Cox S."/>
            <person name="Madueno E."/>
            <person name="de Pablos B."/>
            <person name="Modolell J."/>
            <person name="Peter A."/>
            <person name="Schoettler P."/>
            <person name="Werner M."/>
            <person name="Mourkioti F."/>
            <person name="Beinert N."/>
            <person name="Dowe G."/>
            <person name="Schaefer U."/>
            <person name="Jaeckle H."/>
            <person name="Bucheton A."/>
            <person name="Callister D.M."/>
            <person name="Campbell L.A."/>
            <person name="Darlamitsou A."/>
            <person name="Henderson N.S."/>
            <person name="McMillan P.J."/>
            <person name="Salles C."/>
            <person name="Tait E.A."/>
            <person name="Valenti P."/>
            <person name="Saunders R.D.C."/>
            <person name="Glover D.M."/>
        </authorList>
    </citation>
    <scope>NUCLEOTIDE SEQUENCE [LARGE SCALE GENOMIC DNA]</scope>
    <source>
        <strain>Oregon-R</strain>
    </source>
</reference>
<reference key="5">
    <citation type="journal article" date="2002" name="Genome Biol.">
        <title>A Drosophila full-length cDNA resource.</title>
        <authorList>
            <person name="Stapleton M."/>
            <person name="Carlson J.W."/>
            <person name="Brokstein P."/>
            <person name="Yu C."/>
            <person name="Champe M."/>
            <person name="George R.A."/>
            <person name="Guarin H."/>
            <person name="Kronmiller B."/>
            <person name="Pacleb J.M."/>
            <person name="Park S."/>
            <person name="Wan K.H."/>
            <person name="Rubin G.M."/>
            <person name="Celniker S.E."/>
        </authorList>
    </citation>
    <scope>NUCLEOTIDE SEQUENCE [LARGE SCALE MRNA]</scope>
    <source>
        <strain>Berkeley</strain>
        <tissue>Embryo</tissue>
    </source>
</reference>
<evidence type="ECO:0000250" key="1">
    <source>
        <dbReference type="UniProtKB" id="Q8IYT2"/>
    </source>
</evidence>
<evidence type="ECO:0000255" key="2">
    <source>
        <dbReference type="PROSITE-ProRule" id="PRU00946"/>
    </source>
</evidence>
<evidence type="ECO:0000256" key="3">
    <source>
        <dbReference type="SAM" id="MobiDB-lite"/>
    </source>
</evidence>
<evidence type="ECO:0000269" key="4">
    <source>
    </source>
</evidence>
<evidence type="ECO:0000305" key="5"/>
<feature type="chain" id="PRO_0000388728" description="Cap-specific mRNA (nucleoside-2'-O-)-methyltransferase 2">
    <location>
        <begin position="1"/>
        <end position="700"/>
    </location>
</feature>
<feature type="domain" description="Adrift-type SAM-dependent 2'-O-MTase" evidence="2">
    <location>
        <begin position="109"/>
        <end position="321"/>
    </location>
</feature>
<feature type="region of interest" description="Disordered" evidence="3">
    <location>
        <begin position="1"/>
        <end position="21"/>
    </location>
</feature>
<feature type="active site" evidence="1">
    <location>
        <position position="117"/>
    </location>
</feature>
<feature type="active site" evidence="1">
    <location>
        <position position="234"/>
    </location>
</feature>
<feature type="active site" description="Proton acceptor" evidence="2">
    <location>
        <position position="274"/>
    </location>
</feature>
<feature type="binding site" evidence="2">
    <location>
        <position position="143"/>
    </location>
    <ligand>
        <name>S-adenosyl-L-methionine</name>
        <dbReference type="ChEBI" id="CHEBI:59789"/>
    </ligand>
</feature>
<feature type="binding site" evidence="2">
    <location>
        <position position="164"/>
    </location>
    <ligand>
        <name>S-adenosyl-L-methionine</name>
        <dbReference type="ChEBI" id="CHEBI:59789"/>
    </ligand>
</feature>
<feature type="binding site" evidence="2">
    <location>
        <position position="234"/>
    </location>
    <ligand>
        <name>S-adenosyl-L-methionine</name>
        <dbReference type="ChEBI" id="CHEBI:59789"/>
    </ligand>
</feature>
<feature type="sequence conflict" description="In Ref. 5; AAK84935." evidence="5" ref="5">
    <original>D</original>
    <variation>N</variation>
    <location>
        <position position="325"/>
    </location>
</feature>
<feature type="sequence conflict" description="In Ref. 5; AAK84935." evidence="5" ref="5">
    <original>F</original>
    <variation>S</variation>
    <location>
        <position position="352"/>
    </location>
</feature>
<feature type="sequence conflict" description="In Ref. 1; AAD22030." evidence="5" ref="1">
    <original>E</original>
    <variation>K</variation>
    <location>
        <position position="547"/>
    </location>
</feature>
<feature type="sequence conflict" description="In Ref. 4; CAA22952." evidence="5" ref="4">
    <original>K</original>
    <variation>E</variation>
    <location>
        <position position="568"/>
    </location>
</feature>
<feature type="sequence conflict" description="In Ref. 4; CAA22952." evidence="5" ref="4">
    <original>Q</original>
    <variation>R</variation>
    <location>
        <position position="635"/>
    </location>
</feature>
<sequence>MSFRSSPQGKPHPMTDYQSIRPSEVEQLFEKKFHYQKPKGNKSWQLPPPDQALFSEFYQFEALQGLREQLNAVKSKLNDYGVQEWSAHTNRRDPSGEVSWRLKNDTKAEFVTVAWCKLFECLHRYPLVTKPAVNSMHLCEAPGAFIASLNHYLHSKYEKDEIKWRWRSTTLNPYYEGNAINQMISDDRFIVHTLDNWFFHKDLTGNLLDVANIDHLVERCEVEFQGQVDLVTADGSIDCAAQPDCQEEIVVRLFFAEVLSALRILSSGGNFLVKMFTLFEACSVSLLYTLNCIFEEVHIFKPATSKRGNSEVYVICLNYNKDHPDLPRLLEEIKSKLAQPNDTLVMPLFAKFQIPHDFLMQHEIACRMYMKLQTDAIEGSIYAYESNDRHYLRHLHHLRSLVANTYYSLYKVKPLEDSLCIVDKEATSKALGFQVPVYGGSYTERESLKHGDLLKQIYCLRREFNQLEKCLNNRTPYSYVKNRTAPLNLHISRGAPVQSLQSSMFASEPILILRLRILDTFELDPVWQSAPKCQLESKTLCYLPPTEDEAFHTAQQRFFIDLLEEVKKLKPDSIVFHKFLFLTHYAASLLLFLIESVYQDCCFNSNQAQTLTLSKLKDTANSALEQVLELLKDEQAGAIHSLLDIKELQKNQFSKALIQHNNSIVMTCFRSMLGEESFPMPVAPTSNSDVGSIQESAAVF</sequence>
<organism>
    <name type="scientific">Drosophila melanogaster</name>
    <name type="common">Fruit fly</name>
    <dbReference type="NCBI Taxonomy" id="7227"/>
    <lineage>
        <taxon>Eukaryota</taxon>
        <taxon>Metazoa</taxon>
        <taxon>Ecdysozoa</taxon>
        <taxon>Arthropoda</taxon>
        <taxon>Hexapoda</taxon>
        <taxon>Insecta</taxon>
        <taxon>Pterygota</taxon>
        <taxon>Neoptera</taxon>
        <taxon>Endopterygota</taxon>
        <taxon>Diptera</taxon>
        <taxon>Brachycera</taxon>
        <taxon>Muscomorpha</taxon>
        <taxon>Ephydroidea</taxon>
        <taxon>Drosophilidae</taxon>
        <taxon>Drosophila</taxon>
        <taxon>Sophophora</taxon>
    </lineage>
</organism>
<comment type="function">
    <text evidence="1 4">Probable S-adenosyl-L-methionine-dependent methyltransferase that mediates mRNA cap2 2'-O-ribose methylation to the 5'-cap structure of mRNAs. May methylate the ribose of the second nucleotide of a m(7)GpppG-capped mRNA (cap0) to produce m(7)GpppRmpNm (cap2) (By similarity). Regulates expression of tracheal genes required for pathfinding on the segmental nerve (PubMed:10068643).</text>
</comment>
<comment type="catalytic activity">
    <reaction evidence="1">
        <text>a 5'-end (N(7)-methyl 5'-triphosphoguanosine)-(2'-O-methyl-ribonucleoside)-(ribonucleotide) in mRNA + S-adenosyl-L-methionine = a 5'-end (N(7)-methyl 5'-triphosphoguanosine)-(2'-O-methyl-ribonucleoside)-(2'-O-methyl-ribonucleotide) in mRNA + S-adenosyl-L-homocysteine + H(+)</text>
        <dbReference type="Rhea" id="RHEA:67024"/>
        <dbReference type="Rhea" id="RHEA-COMP:17169"/>
        <dbReference type="Rhea" id="RHEA-COMP:17170"/>
        <dbReference type="ChEBI" id="CHEBI:15378"/>
        <dbReference type="ChEBI" id="CHEBI:57856"/>
        <dbReference type="ChEBI" id="CHEBI:59789"/>
        <dbReference type="ChEBI" id="CHEBI:167612"/>
        <dbReference type="ChEBI" id="CHEBI:167614"/>
        <dbReference type="EC" id="2.1.1.296"/>
    </reaction>
</comment>
<comment type="subcellular location">
    <subcellularLocation>
        <location evidence="4">Nucleus</location>
    </subcellularLocation>
</comment>
<comment type="developmental stage">
    <text evidence="4">Maternally expressed and distributed during the syncytial blastoderm stage. In zygote first detected in mid-embryogenesis in the developing tracheal system and later in the developing gonad. Tracheal expression is highly dynamic. At stage 11, weakly expressed in all tracheal cells. During stages 12 and 13, preferential expression in the leading cells of the ganglionic branch and other growing primary branches. During stages 14 and 15, expression becomes further restricted to just the GB1 terminal cell and other terminal cells.</text>
</comment>
<comment type="induction">
    <text evidence="4">Induced by the branchless FGF pathway in migrating tracheal cells, resulting of the switch from the intersegmental to the segmental nerve.</text>
</comment>
<comment type="disruption phenotype">
    <text evidence="4">Ganglionic branches migrate normally along the intersegmental nerve, but sporadically fail to switch to the segmental nerve and enter the CNS; they wind up meandering along the ventral epidermis instead.</text>
</comment>
<accession>Q9UAS6</accession>
<accession>A1ZB00</accession>
<accession>O96839</accession>
<accession>Q961S3</accession>
<protein>
    <recommendedName>
        <fullName>Cap-specific mRNA (nucleoside-2'-O-)-methyltransferase 2</fullName>
        <ecNumber evidence="1">2.1.1.296</ecNumber>
    </recommendedName>
    <alternativeName>
        <fullName>Cap methyltransferase 2 homolog</fullName>
    </alternativeName>
    <alternativeName>
        <fullName>Cap2 2'O-ribose methyltransferase 2 homolog</fullName>
        <shortName>MTr2</shortName>
    </alternativeName>
    <alternativeName>
        <fullName>FtsJ methyltransferase domain-containing protein 1 homolog</fullName>
    </alternativeName>
    <alternativeName>
        <fullName>Protein Adrift</fullName>
    </alternativeName>
</protein>